<protein>
    <recommendedName>
        <fullName>Longitudinals lacking protein, isoform G</fullName>
    </recommendedName>
</protein>
<evidence type="ECO:0000255" key="1">
    <source>
        <dbReference type="PROSITE-ProRule" id="PRU00037"/>
    </source>
</evidence>
<evidence type="ECO:0000255" key="2">
    <source>
        <dbReference type="PROSITE-ProRule" id="PRU00042"/>
    </source>
</evidence>
<evidence type="ECO:0000256" key="3">
    <source>
        <dbReference type="SAM" id="MobiDB-lite"/>
    </source>
</evidence>
<evidence type="ECO:0000269" key="4">
    <source>
    </source>
</evidence>
<evidence type="ECO:0000269" key="5">
    <source>
    </source>
</evidence>
<evidence type="ECO:0000269" key="6">
    <source>
    </source>
</evidence>
<evidence type="ECO:0000269" key="7">
    <source>
    </source>
</evidence>
<evidence type="ECO:0000269" key="8">
    <source>
    </source>
</evidence>
<evidence type="ECO:0000305" key="9"/>
<evidence type="ECO:0000312" key="10">
    <source>
        <dbReference type="FlyBase" id="FBgn0283521"/>
    </source>
</evidence>
<comment type="function">
    <text evidence="4 8">Putative transcription factor required for axon growth and guidance in the central and peripheral nervous systems. Repels CNS axons away from the midline by promoting the expression of the midline repellent sli and its receptor robo.</text>
</comment>
<comment type="subcellular location">
    <subcellularLocation>
        <location evidence="8">Nucleus</location>
    </subcellularLocation>
</comment>
<comment type="alternative products">
    <event type="alternative splicing"/>
    <isoform>
        <id>P42283-1</id>
        <name>G</name>
        <name>Long</name>
        <name>Ohsako-T</name>
        <name>R</name>
        <sequence type="displayed"/>
    </isoform>
    <isoform>
        <id>Q7KQZ4-2</id>
        <name>A</name>
        <name>Ohsako-D</name>
        <sequence type="external"/>
    </isoform>
    <isoform>
        <id>Q7KQZ4-1</id>
        <name>B</name>
        <name>C</name>
        <name>Ohsako-L</name>
        <sequence type="external"/>
    </isoform>
    <isoform>
        <id>Q7KQZ4-3</id>
        <name>D</name>
        <name>E</name>
        <name>Ohsako-F</name>
        <sequence type="external"/>
    </isoform>
    <isoform>
        <id>Q867Z4-2</id>
        <name>F</name>
        <name>Ohsako-I</name>
        <sequence type="external"/>
    </isoform>
    <isoform>
        <id>P42284-3</id>
        <name>H</name>
        <name>Ohsako-M</name>
        <sequence type="external"/>
    </isoform>
    <isoform>
        <id>Q867Z4-1</id>
        <name>I</name>
        <name>Ohsako-K</name>
        <sequence type="external"/>
    </isoform>
    <isoform>
        <id>Q9V5M6-2</id>
        <name>J</name>
        <name>Ohsako-O</name>
        <sequence type="external"/>
    </isoform>
    <isoform>
        <id>Q867Z4-3</id>
        <name>K</name>
        <name>Ohsako-H</name>
        <sequence type="external"/>
    </isoform>
    <isoform>
        <id>Q7KQZ4-4</id>
        <name>L</name>
        <name>Ohsako-C</name>
        <sequence type="external"/>
    </isoform>
    <isoform>
        <id>P42284-1</id>
        <name>M</name>
        <name>Short</name>
        <name>Ohsako-A</name>
        <sequence type="external"/>
    </isoform>
    <isoform>
        <id>Q9V5M3-1</id>
        <name>N</name>
        <sequence type="external"/>
    </isoform>
    <isoform>
        <id>Q9V5M3-2</id>
        <name>O</name>
        <name>Ohsako-P</name>
        <sequence type="external"/>
    </isoform>
    <isoform>
        <id>Q9V5M6-1</id>
        <name>P</name>
        <name>Ohsako-N</name>
        <sequence type="external"/>
    </isoform>
    <isoform>
        <id>Q9V5M6-3</id>
        <name>Q</name>
        <name>Ohsako-B</name>
        <sequence type="external"/>
    </isoform>
    <isoform>
        <id>Q9V5M6-4</id>
        <name>S</name>
        <sequence type="external"/>
    </isoform>
    <isoform>
        <id>Q867Z4-5</id>
        <name>T</name>
        <name>U</name>
        <name>Ohsako-J</name>
        <sequence type="external"/>
    </isoform>
    <isoform>
        <id>P42284-2</id>
        <name>V</name>
        <name>Ohsako-G</name>
        <sequence type="external"/>
    </isoform>
    <isoform>
        <id>Q9V5M3-3</id>
        <name>W</name>
        <name>Ohsako-Q</name>
        <sequence type="external"/>
    </isoform>
    <isoform>
        <id>Q9V5M3-4</id>
        <name>X</name>
        <name>Ohsako-S</name>
        <sequence type="external"/>
    </isoform>
    <isoform>
        <id>Q9V5M3-5</id>
        <name>Y</name>
        <name>Ohsako-R</name>
        <sequence type="external"/>
    </isoform>
    <isoform>
        <id>Q9V5M6-5</id>
        <name>Z</name>
        <name>Ohsako-E</name>
        <sequence type="external"/>
    </isoform>
    <text>Some isoforms may be generated by alternative trans-splicing of exons sequentially encoded by the same DNA strand.</text>
</comment>
<comment type="tissue specificity">
    <text evidence="6">Expressed in both mesoderm and ectoderm with expression highest in the mesectoderm by stage 11. Becomes enriched in a cluster of brain cells, in abdominal histoblasts, and in the embryonic imaginal disks during later stages.</text>
</comment>
<comment type="developmental stage">
    <text evidence="5 6 8">Expressed both maternally and zygotically. At least one isoform is present at each developmental stage.</text>
</comment>
<comment type="miscellaneous">
    <molecule>Isoform G</molecule>
    <text>C-terminal exons may be joined by a trans-splicing event. The exons are coded by the same DNA strand.</text>
</comment>
<keyword id="KW-0025">Alternative splicing</keyword>
<keyword id="KW-0217">Developmental protein</keyword>
<keyword id="KW-0221">Differentiation</keyword>
<keyword id="KW-0238">DNA-binding</keyword>
<keyword id="KW-0479">Metal-binding</keyword>
<keyword id="KW-0524">Neurogenesis</keyword>
<keyword id="KW-0539">Nucleus</keyword>
<keyword id="KW-0597">Phosphoprotein</keyword>
<keyword id="KW-1185">Reference proteome</keyword>
<keyword id="KW-0677">Repeat</keyword>
<keyword id="KW-0804">Transcription</keyword>
<keyword id="KW-0805">Transcription regulation</keyword>
<keyword id="KW-0862">Zinc</keyword>
<keyword id="KW-0863">Zinc-finger</keyword>
<name>LOLA1_DROME</name>
<accession>P42283</accession>
<accession>Q54A11</accession>
<accession>Q9V5M2</accession>
<feature type="chain" id="PRO_0000047072" description="Longitudinals lacking protein, isoform G">
    <location>
        <begin position="1"/>
        <end position="891"/>
    </location>
</feature>
<feature type="domain" description="BTB" evidence="1">
    <location>
        <begin position="32"/>
        <end position="97"/>
    </location>
</feature>
<feature type="zinc finger region" description="C2H2-type 1; degenerate" evidence="2">
    <location>
        <begin position="791"/>
        <end position="813"/>
    </location>
</feature>
<feature type="zinc finger region" description="C2H2-type 2" evidence="2">
    <location>
        <begin position="821"/>
        <end position="843"/>
    </location>
</feature>
<feature type="region of interest" description="Disordered" evidence="3">
    <location>
        <begin position="115"/>
        <end position="200"/>
    </location>
</feature>
<feature type="region of interest" description="Disordered" evidence="3">
    <location>
        <begin position="228"/>
        <end position="340"/>
    </location>
</feature>
<feature type="region of interest" description="Disordered" evidence="3">
    <location>
        <begin position="446"/>
        <end position="467"/>
    </location>
</feature>
<feature type="region of interest" description="Disordered" evidence="3">
    <location>
        <begin position="840"/>
        <end position="891"/>
    </location>
</feature>
<feature type="compositionally biased region" description="Low complexity" evidence="3">
    <location>
        <begin position="162"/>
        <end position="175"/>
    </location>
</feature>
<feature type="compositionally biased region" description="Low complexity" evidence="3">
    <location>
        <begin position="228"/>
        <end position="251"/>
    </location>
</feature>
<feature type="compositionally biased region" description="Low complexity" evidence="3">
    <location>
        <begin position="263"/>
        <end position="293"/>
    </location>
</feature>
<feature type="compositionally biased region" description="Low complexity" evidence="3">
    <location>
        <begin position="329"/>
        <end position="340"/>
    </location>
</feature>
<feature type="compositionally biased region" description="Basic and acidic residues" evidence="3">
    <location>
        <begin position="449"/>
        <end position="462"/>
    </location>
</feature>
<feature type="modified residue" description="Phosphoserine" evidence="7">
    <location>
        <position position="140"/>
    </location>
</feature>
<feature type="modified residue" description="Phosphothreonine" evidence="7">
    <location>
        <position position="161"/>
    </location>
</feature>
<feature type="modified residue" description="Phosphoserine" evidence="7">
    <location>
        <position position="162"/>
    </location>
</feature>
<feature type="modified residue" description="Phosphoserine" evidence="7">
    <location>
        <position position="168"/>
    </location>
</feature>
<feature type="modified residue" description="Phosphoserine" evidence="7">
    <location>
        <position position="372"/>
    </location>
</feature>
<feature type="modified residue" description="Phosphoserine" evidence="7">
    <location>
        <position position="375"/>
    </location>
</feature>
<feature type="modified residue" description="Phosphoserine" evidence="7">
    <location>
        <position position="378"/>
    </location>
</feature>
<feature type="modified residue" description="Phosphoserine" evidence="7">
    <location>
        <position position="696"/>
    </location>
</feature>
<feature type="modified residue" description="Phosphoserine" evidence="7">
    <location>
        <position position="705"/>
    </location>
</feature>
<feature type="modified residue" description="Phosphothreonine" evidence="7">
    <location>
        <position position="706"/>
    </location>
</feature>
<feature type="modified residue" description="Phosphoserine" evidence="7">
    <location>
        <position position="749"/>
    </location>
</feature>
<feature type="modified residue" description="Phosphoserine" evidence="7">
    <location>
        <position position="750"/>
    </location>
</feature>
<feature type="modified residue" description="Phosphoserine" evidence="7">
    <location>
        <position position="874"/>
    </location>
</feature>
<feature type="mutagenesis site" description="In ORE120; defective in embryonic axon guidance." evidence="4">
    <original>A</original>
    <variation>V</variation>
    <location>
        <position position="107"/>
    </location>
</feature>
<feature type="sequence conflict" description="In Ref. 1; AAA19593 and 2; BAC67596/BAC67616/BAC67636/BAC67656." evidence="9" ref="1 2">
    <original>HTT</original>
    <variation>QLGVVK</variation>
    <location>
        <begin position="605"/>
        <end position="607"/>
    </location>
</feature>
<dbReference type="EMBL" id="U07607">
    <property type="protein sequence ID" value="AAA19593.1"/>
    <property type="molecule type" value="mRNA"/>
</dbReference>
<dbReference type="EMBL" id="AB107291">
    <property type="protein sequence ID" value="BAC67596.1"/>
    <property type="molecule type" value="mRNA"/>
</dbReference>
<dbReference type="EMBL" id="AB107311">
    <property type="protein sequence ID" value="BAC67616.1"/>
    <property type="molecule type" value="mRNA"/>
</dbReference>
<dbReference type="EMBL" id="AB107331">
    <property type="protein sequence ID" value="BAC67636.1"/>
    <property type="molecule type" value="mRNA"/>
</dbReference>
<dbReference type="EMBL" id="AB107351">
    <property type="protein sequence ID" value="BAC67656.1"/>
    <property type="molecule type" value="mRNA"/>
</dbReference>
<dbReference type="EMBL" id="AE013599">
    <property type="protein sequence ID" value="AAF58782.2"/>
    <property type="molecule type" value="Genomic_DNA"/>
</dbReference>
<dbReference type="EMBL" id="AE013599">
    <property type="protein sequence ID" value="AAO41425.2"/>
    <property type="molecule type" value="Genomic_DNA"/>
</dbReference>
<dbReference type="RefSeq" id="NP_524766.2">
    <molecule id="P42283-1"/>
    <property type="nucleotide sequence ID" value="NM_080027.6"/>
</dbReference>
<dbReference type="RefSeq" id="NP_788312.2">
    <molecule id="P42283-1"/>
    <property type="nucleotide sequence ID" value="NM_176132.4"/>
</dbReference>
<dbReference type="SASBDB" id="P42283"/>
<dbReference type="BioGRID" id="69126">
    <property type="interactions" value="58"/>
</dbReference>
<dbReference type="IntAct" id="P42283">
    <property type="interactions" value="4"/>
</dbReference>
<dbReference type="STRING" id="7227.FBpp0312610"/>
<dbReference type="iPTMnet" id="P42283"/>
<dbReference type="DNASU" id="44548"/>
<dbReference type="EnsemblMetazoa" id="FBtr0089347">
    <molecule id="P42283-1"/>
    <property type="protein sequence ID" value="FBpp0088381"/>
    <property type="gene ID" value="FBgn0283521"/>
</dbReference>
<dbReference type="EnsemblMetazoa" id="FBtr0089357">
    <molecule id="P42283-1"/>
    <property type="protein sequence ID" value="FBpp0088391"/>
    <property type="gene ID" value="FBgn0283521"/>
</dbReference>
<dbReference type="GeneID" id="44548"/>
<dbReference type="KEGG" id="dme:Dmel_CG12052"/>
<dbReference type="AGR" id="FB:FBgn0283521"/>
<dbReference type="CTD" id="44548"/>
<dbReference type="FlyBase" id="FBgn0283521">
    <property type="gene designation" value="lola"/>
</dbReference>
<dbReference type="VEuPathDB" id="VectorBase:FBgn0283521"/>
<dbReference type="GeneTree" id="ENSGT00940000174551"/>
<dbReference type="HOGENOM" id="CLU_010740_3_0_1"/>
<dbReference type="OrthoDB" id="407106at2759"/>
<dbReference type="SignaLink" id="P42283"/>
<dbReference type="BioGRID-ORCS" id="44548">
    <property type="hits" value="1 hit in 1 CRISPR screen"/>
</dbReference>
<dbReference type="ChiTaRS" id="lola">
    <property type="organism name" value="fly"/>
</dbReference>
<dbReference type="GenomeRNAi" id="44548"/>
<dbReference type="Proteomes" id="UP000000803">
    <property type="component" value="Chromosome 2R"/>
</dbReference>
<dbReference type="Bgee" id="FBgn0283521">
    <property type="expression patterns" value="Expressed in adult differentiating enterocyte in digestive tract and 312 other cell types or tissues"/>
</dbReference>
<dbReference type="ExpressionAtlas" id="P42283">
    <property type="expression patterns" value="baseline and differential"/>
</dbReference>
<dbReference type="GO" id="GO:0005654">
    <property type="term" value="C:nucleoplasm"/>
    <property type="evidence" value="ECO:0007005"/>
    <property type="project" value="FlyBase"/>
</dbReference>
<dbReference type="GO" id="GO:0005634">
    <property type="term" value="C:nucleus"/>
    <property type="evidence" value="ECO:0000314"/>
    <property type="project" value="UniProtKB"/>
</dbReference>
<dbReference type="GO" id="GO:0003677">
    <property type="term" value="F:DNA binding"/>
    <property type="evidence" value="ECO:0007669"/>
    <property type="project" value="UniProtKB-KW"/>
</dbReference>
<dbReference type="GO" id="GO:0003700">
    <property type="term" value="F:DNA-binding transcription factor activity"/>
    <property type="evidence" value="ECO:0000250"/>
    <property type="project" value="FlyBase"/>
</dbReference>
<dbReference type="GO" id="GO:0008270">
    <property type="term" value="F:zinc ion binding"/>
    <property type="evidence" value="ECO:0007669"/>
    <property type="project" value="UniProtKB-KW"/>
</dbReference>
<dbReference type="GO" id="GO:0007411">
    <property type="term" value="P:axon guidance"/>
    <property type="evidence" value="ECO:0000315"/>
    <property type="project" value="UniProtKB"/>
</dbReference>
<dbReference type="GO" id="GO:0016199">
    <property type="term" value="P:axon midline choice point recognition"/>
    <property type="evidence" value="ECO:0000315"/>
    <property type="project" value="UniProtKB"/>
</dbReference>
<dbReference type="GO" id="GO:0007409">
    <property type="term" value="P:axonogenesis"/>
    <property type="evidence" value="ECO:0000315"/>
    <property type="project" value="UniProtKB"/>
</dbReference>
<dbReference type="GO" id="GO:0048813">
    <property type="term" value="P:dendrite morphogenesis"/>
    <property type="evidence" value="ECO:0000315"/>
    <property type="project" value="FlyBase"/>
</dbReference>
<dbReference type="GO" id="GO:0008406">
    <property type="term" value="P:gonad development"/>
    <property type="evidence" value="ECO:0000315"/>
    <property type="project" value="FlyBase"/>
</dbReference>
<dbReference type="GO" id="GO:0035167">
    <property type="term" value="P:larval lymph gland hemopoiesis"/>
    <property type="evidence" value="ECO:0000315"/>
    <property type="project" value="FlyBase"/>
</dbReference>
<dbReference type="GO" id="GO:0007526">
    <property type="term" value="P:larval somatic muscle development"/>
    <property type="evidence" value="ECO:0000315"/>
    <property type="project" value="FlyBase"/>
</dbReference>
<dbReference type="GO" id="GO:0045476">
    <property type="term" value="P:nurse cell apoptotic process"/>
    <property type="evidence" value="ECO:0000315"/>
    <property type="project" value="FlyBase"/>
</dbReference>
<dbReference type="GO" id="GO:0045893">
    <property type="term" value="P:positive regulation of DNA-templated transcription"/>
    <property type="evidence" value="ECO:0000250"/>
    <property type="project" value="UniProtKB"/>
</dbReference>
<dbReference type="GO" id="GO:0007464">
    <property type="term" value="P:R3/R4 cell fate commitment"/>
    <property type="evidence" value="ECO:0000315"/>
    <property type="project" value="FlyBase"/>
</dbReference>
<dbReference type="GO" id="GO:0045467">
    <property type="term" value="P:R7 cell development"/>
    <property type="evidence" value="ECO:0000315"/>
    <property type="project" value="FlyBase"/>
</dbReference>
<dbReference type="GO" id="GO:0006355">
    <property type="term" value="P:regulation of DNA-templated transcription"/>
    <property type="evidence" value="ECO:0000315"/>
    <property type="project" value="FlyBase"/>
</dbReference>
<dbReference type="GO" id="GO:0006357">
    <property type="term" value="P:regulation of transcription by RNA polymerase II"/>
    <property type="evidence" value="ECO:0000318"/>
    <property type="project" value="GO_Central"/>
</dbReference>
<dbReference type="CDD" id="cd18315">
    <property type="entry name" value="BTB_POZ_BAB-like"/>
    <property type="match status" value="1"/>
</dbReference>
<dbReference type="FunFam" id="3.30.710.10:FF:000091">
    <property type="entry name" value="Lola, isoform F"/>
    <property type="match status" value="1"/>
</dbReference>
<dbReference type="Gene3D" id="3.30.160.60">
    <property type="entry name" value="Classic Zinc Finger"/>
    <property type="match status" value="1"/>
</dbReference>
<dbReference type="Gene3D" id="3.30.710.10">
    <property type="entry name" value="Potassium Channel Kv1.1, Chain A"/>
    <property type="match status" value="1"/>
</dbReference>
<dbReference type="InterPro" id="IPR000210">
    <property type="entry name" value="BTB/POZ_dom"/>
</dbReference>
<dbReference type="InterPro" id="IPR051095">
    <property type="entry name" value="Dros_DevTransReg"/>
</dbReference>
<dbReference type="InterPro" id="IPR011333">
    <property type="entry name" value="SKP1/BTB/POZ_sf"/>
</dbReference>
<dbReference type="InterPro" id="IPR036236">
    <property type="entry name" value="Znf_C2H2_sf"/>
</dbReference>
<dbReference type="InterPro" id="IPR013087">
    <property type="entry name" value="Znf_C2H2_type"/>
</dbReference>
<dbReference type="PANTHER" id="PTHR23110">
    <property type="entry name" value="BTB DOMAIN TRANSCRIPTION FACTOR"/>
    <property type="match status" value="1"/>
</dbReference>
<dbReference type="PANTHER" id="PTHR23110:SF98">
    <property type="entry name" value="PRE-LOLA-G, ISOFORM C-RELATED"/>
    <property type="match status" value="1"/>
</dbReference>
<dbReference type="Pfam" id="PF00651">
    <property type="entry name" value="BTB"/>
    <property type="match status" value="1"/>
</dbReference>
<dbReference type="SMART" id="SM00225">
    <property type="entry name" value="BTB"/>
    <property type="match status" value="1"/>
</dbReference>
<dbReference type="SMART" id="SM00355">
    <property type="entry name" value="ZnF_C2H2"/>
    <property type="match status" value="2"/>
</dbReference>
<dbReference type="SUPFAM" id="SSF57667">
    <property type="entry name" value="beta-beta-alpha zinc fingers"/>
    <property type="match status" value="1"/>
</dbReference>
<dbReference type="SUPFAM" id="SSF54695">
    <property type="entry name" value="POZ domain"/>
    <property type="match status" value="1"/>
</dbReference>
<dbReference type="PROSITE" id="PS50097">
    <property type="entry name" value="BTB"/>
    <property type="match status" value="1"/>
</dbReference>
<dbReference type="PROSITE" id="PS50157">
    <property type="entry name" value="ZINC_FINGER_C2H2_2"/>
    <property type="match status" value="1"/>
</dbReference>
<reference key="1">
    <citation type="journal article" date="1994" name="Development">
        <title>Lola encodes a putative transcription factor required for axon growth and guidance in Drosophila.</title>
        <authorList>
            <person name="Giniger E."/>
            <person name="Tietje K."/>
            <person name="Jan L.Y."/>
            <person name="Jan Y.N."/>
        </authorList>
    </citation>
    <scope>NUCLEOTIDE SEQUENCE [MRNA]</scope>
    <scope>FUNCTION</scope>
    <scope>SUBCELLULAR LOCATION</scope>
    <scope>DEVELOPMENTAL STAGE</scope>
    <source>
        <tissue>Embryo</tissue>
    </source>
</reference>
<reference key="2">
    <citation type="journal article" date="2003" name="Gene">
        <title>Drosophila lola encodes a family of BTB-transcription regulators with highly variable C-terminal domains containing zinc finger motifs.</title>
        <authorList>
            <person name="Ohsako T."/>
            <person name="Horiuchi T."/>
            <person name="Matsuo T."/>
            <person name="Komaya S."/>
            <person name="Aigaki T."/>
        </authorList>
    </citation>
    <scope>NUCLEOTIDE SEQUENCE [MRNA]</scope>
    <source>
        <strain>Canton-S</strain>
    </source>
</reference>
<reference key="3">
    <citation type="journal article" date="2000" name="Science">
        <title>The genome sequence of Drosophila melanogaster.</title>
        <authorList>
            <person name="Adams M.D."/>
            <person name="Celniker S.E."/>
            <person name="Holt R.A."/>
            <person name="Evans C.A."/>
            <person name="Gocayne J.D."/>
            <person name="Amanatides P.G."/>
            <person name="Scherer S.E."/>
            <person name="Li P.W."/>
            <person name="Hoskins R.A."/>
            <person name="Galle R.F."/>
            <person name="George R.A."/>
            <person name="Lewis S.E."/>
            <person name="Richards S."/>
            <person name="Ashburner M."/>
            <person name="Henderson S.N."/>
            <person name="Sutton G.G."/>
            <person name="Wortman J.R."/>
            <person name="Yandell M.D."/>
            <person name="Zhang Q."/>
            <person name="Chen L.X."/>
            <person name="Brandon R.C."/>
            <person name="Rogers Y.-H.C."/>
            <person name="Blazej R.G."/>
            <person name="Champe M."/>
            <person name="Pfeiffer B.D."/>
            <person name="Wan K.H."/>
            <person name="Doyle C."/>
            <person name="Baxter E.G."/>
            <person name="Helt G."/>
            <person name="Nelson C.R."/>
            <person name="Miklos G.L.G."/>
            <person name="Abril J.F."/>
            <person name="Agbayani A."/>
            <person name="An H.-J."/>
            <person name="Andrews-Pfannkoch C."/>
            <person name="Baldwin D."/>
            <person name="Ballew R.M."/>
            <person name="Basu A."/>
            <person name="Baxendale J."/>
            <person name="Bayraktaroglu L."/>
            <person name="Beasley E.M."/>
            <person name="Beeson K.Y."/>
            <person name="Benos P.V."/>
            <person name="Berman B.P."/>
            <person name="Bhandari D."/>
            <person name="Bolshakov S."/>
            <person name="Borkova D."/>
            <person name="Botchan M.R."/>
            <person name="Bouck J."/>
            <person name="Brokstein P."/>
            <person name="Brottier P."/>
            <person name="Burtis K.C."/>
            <person name="Busam D.A."/>
            <person name="Butler H."/>
            <person name="Cadieu E."/>
            <person name="Center A."/>
            <person name="Chandra I."/>
            <person name="Cherry J.M."/>
            <person name="Cawley S."/>
            <person name="Dahlke C."/>
            <person name="Davenport L.B."/>
            <person name="Davies P."/>
            <person name="de Pablos B."/>
            <person name="Delcher A."/>
            <person name="Deng Z."/>
            <person name="Mays A.D."/>
            <person name="Dew I."/>
            <person name="Dietz S.M."/>
            <person name="Dodson K."/>
            <person name="Doup L.E."/>
            <person name="Downes M."/>
            <person name="Dugan-Rocha S."/>
            <person name="Dunkov B.C."/>
            <person name="Dunn P."/>
            <person name="Durbin K.J."/>
            <person name="Evangelista C.C."/>
            <person name="Ferraz C."/>
            <person name="Ferriera S."/>
            <person name="Fleischmann W."/>
            <person name="Fosler C."/>
            <person name="Gabrielian A.E."/>
            <person name="Garg N.S."/>
            <person name="Gelbart W.M."/>
            <person name="Glasser K."/>
            <person name="Glodek A."/>
            <person name="Gong F."/>
            <person name="Gorrell J.H."/>
            <person name="Gu Z."/>
            <person name="Guan P."/>
            <person name="Harris M."/>
            <person name="Harris N.L."/>
            <person name="Harvey D.A."/>
            <person name="Heiman T.J."/>
            <person name="Hernandez J.R."/>
            <person name="Houck J."/>
            <person name="Hostin D."/>
            <person name="Houston K.A."/>
            <person name="Howland T.J."/>
            <person name="Wei M.-H."/>
            <person name="Ibegwam C."/>
            <person name="Jalali M."/>
            <person name="Kalush F."/>
            <person name="Karpen G.H."/>
            <person name="Ke Z."/>
            <person name="Kennison J.A."/>
            <person name="Ketchum K.A."/>
            <person name="Kimmel B.E."/>
            <person name="Kodira C.D."/>
            <person name="Kraft C.L."/>
            <person name="Kravitz S."/>
            <person name="Kulp D."/>
            <person name="Lai Z."/>
            <person name="Lasko P."/>
            <person name="Lei Y."/>
            <person name="Levitsky A.A."/>
            <person name="Li J.H."/>
            <person name="Li Z."/>
            <person name="Liang Y."/>
            <person name="Lin X."/>
            <person name="Liu X."/>
            <person name="Mattei B."/>
            <person name="McIntosh T.C."/>
            <person name="McLeod M.P."/>
            <person name="McPherson D."/>
            <person name="Merkulov G."/>
            <person name="Milshina N.V."/>
            <person name="Mobarry C."/>
            <person name="Morris J."/>
            <person name="Moshrefi A."/>
            <person name="Mount S.M."/>
            <person name="Moy M."/>
            <person name="Murphy B."/>
            <person name="Murphy L."/>
            <person name="Muzny D.M."/>
            <person name="Nelson D.L."/>
            <person name="Nelson D.R."/>
            <person name="Nelson K.A."/>
            <person name="Nixon K."/>
            <person name="Nusskern D.R."/>
            <person name="Pacleb J.M."/>
            <person name="Palazzolo M."/>
            <person name="Pittman G.S."/>
            <person name="Pan S."/>
            <person name="Pollard J."/>
            <person name="Puri V."/>
            <person name="Reese M.G."/>
            <person name="Reinert K."/>
            <person name="Remington K."/>
            <person name="Saunders R.D.C."/>
            <person name="Scheeler F."/>
            <person name="Shen H."/>
            <person name="Shue B.C."/>
            <person name="Siden-Kiamos I."/>
            <person name="Simpson M."/>
            <person name="Skupski M.P."/>
            <person name="Smith T.J."/>
            <person name="Spier E."/>
            <person name="Spradling A.C."/>
            <person name="Stapleton M."/>
            <person name="Strong R."/>
            <person name="Sun E."/>
            <person name="Svirskas R."/>
            <person name="Tector C."/>
            <person name="Turner R."/>
            <person name="Venter E."/>
            <person name="Wang A.H."/>
            <person name="Wang X."/>
            <person name="Wang Z.-Y."/>
            <person name="Wassarman D.A."/>
            <person name="Weinstock G.M."/>
            <person name="Weissenbach J."/>
            <person name="Williams S.M."/>
            <person name="Woodage T."/>
            <person name="Worley K.C."/>
            <person name="Wu D."/>
            <person name="Yang S."/>
            <person name="Yao Q.A."/>
            <person name="Ye J."/>
            <person name="Yeh R.-F."/>
            <person name="Zaveri J.S."/>
            <person name="Zhan M."/>
            <person name="Zhang G."/>
            <person name="Zhao Q."/>
            <person name="Zheng L."/>
            <person name="Zheng X.H."/>
            <person name="Zhong F.N."/>
            <person name="Zhong W."/>
            <person name="Zhou X."/>
            <person name="Zhu S.C."/>
            <person name="Zhu X."/>
            <person name="Smith H.O."/>
            <person name="Gibbs R.A."/>
            <person name="Myers E.W."/>
            <person name="Rubin G.M."/>
            <person name="Venter J.C."/>
        </authorList>
    </citation>
    <scope>NUCLEOTIDE SEQUENCE [LARGE SCALE GENOMIC DNA]</scope>
    <source>
        <strain>Berkeley</strain>
    </source>
</reference>
<reference key="4">
    <citation type="journal article" date="2002" name="Genome Biol.">
        <title>Annotation of the Drosophila melanogaster euchromatic genome: a systematic review.</title>
        <authorList>
            <person name="Misra S."/>
            <person name="Crosby M.A."/>
            <person name="Mungall C.J."/>
            <person name="Matthews B.B."/>
            <person name="Campbell K.S."/>
            <person name="Hradecky P."/>
            <person name="Huang Y."/>
            <person name="Kaminker J.S."/>
            <person name="Millburn G.H."/>
            <person name="Prochnik S.E."/>
            <person name="Smith C.D."/>
            <person name="Tupy J.L."/>
            <person name="Whitfield E.J."/>
            <person name="Bayraktaroglu L."/>
            <person name="Berman B.P."/>
            <person name="Bettencourt B.R."/>
            <person name="Celniker S.E."/>
            <person name="de Grey A.D.N.J."/>
            <person name="Drysdale R.A."/>
            <person name="Harris N.L."/>
            <person name="Richter J."/>
            <person name="Russo S."/>
            <person name="Schroeder A.J."/>
            <person name="Shu S.Q."/>
            <person name="Stapleton M."/>
            <person name="Yamada C."/>
            <person name="Ashburner M."/>
            <person name="Gelbart W.M."/>
            <person name="Rubin G.M."/>
            <person name="Lewis S.E."/>
        </authorList>
    </citation>
    <scope>GENOME REANNOTATION</scope>
    <scope>ALTERNATIVE SPLICING</scope>
    <source>
        <strain>Berkeley</strain>
    </source>
</reference>
<reference key="5">
    <citation type="journal article" date="2002" name="Development">
        <title>Lola regulates midline crossing of CNS axons in Drosophila.</title>
        <authorList>
            <person name="Crowner D."/>
            <person name="Madden K."/>
            <person name="Goeke S."/>
            <person name="Giniger E."/>
        </authorList>
    </citation>
    <scope>FUNCTION</scope>
    <scope>MUTAGENESIS OF ALA-107</scope>
</reference>
<reference key="6">
    <citation type="journal article" date="2003" name="Genes Dev.">
        <title>Alternative trans-splicing of constant and variable exons of a Drosophila axon guidance gene, lola.</title>
        <authorList>
            <person name="Horiuchi T."/>
            <person name="Giniger E."/>
            <person name="Aigaki T."/>
        </authorList>
    </citation>
    <scope>TRANS-SPLICING</scope>
</reference>
<reference key="7">
    <citation type="journal article" date="2003" name="J. Biol. Chem.">
        <title>A developmentally regulated splice variant from the complex lola locus encoding multiple different zinc finger domain proteins interacts with the chromosomal kinase JIL-1.</title>
        <authorList>
            <person name="Zhang W."/>
            <person name="Wang Y."/>
            <person name="Long J."/>
            <person name="Girton J."/>
            <person name="Johansen J."/>
            <person name="Johansen K.M."/>
        </authorList>
    </citation>
    <scope>DEVELOPMENTAL STAGE</scope>
</reference>
<reference key="8">
    <citation type="journal article" date="2003" name="Nat. Neurosci.">
        <title>Alternative splicing of lola generates 19 transcription factors controlling axon guidance in Drosophila.</title>
        <authorList>
            <person name="Goeke S."/>
            <person name="Greene E.A."/>
            <person name="Grant P.K."/>
            <person name="Gates M.A."/>
            <person name="Crowner D."/>
            <person name="Aigaki T."/>
            <person name="Giniger E."/>
        </authorList>
    </citation>
    <scope>DEVELOPMENTAL STAGE</scope>
    <scope>TISSUE SPECIFICITY</scope>
</reference>
<reference key="9">
    <citation type="journal article" date="2008" name="J. Proteome Res.">
        <title>Phosphoproteome analysis of Drosophila melanogaster embryos.</title>
        <authorList>
            <person name="Zhai B."/>
            <person name="Villen J."/>
            <person name="Beausoleil S.A."/>
            <person name="Mintseris J."/>
            <person name="Gygi S.P."/>
        </authorList>
    </citation>
    <scope>PHOSPHORYLATION [LARGE SCALE ANALYSIS] AT SER-140; THR-161; SER-162; SER-168; SER-372; SER-375; SER-378; SER-696; SER-705; THR-706; SER-749; SER-750 AND SER-874</scope>
    <scope>IDENTIFICATION BY MASS SPECTROMETRY</scope>
    <source>
        <tissue>Embryo</tissue>
    </source>
</reference>
<proteinExistence type="evidence at protein level"/>
<organism>
    <name type="scientific">Drosophila melanogaster</name>
    <name type="common">Fruit fly</name>
    <dbReference type="NCBI Taxonomy" id="7227"/>
    <lineage>
        <taxon>Eukaryota</taxon>
        <taxon>Metazoa</taxon>
        <taxon>Ecdysozoa</taxon>
        <taxon>Arthropoda</taxon>
        <taxon>Hexapoda</taxon>
        <taxon>Insecta</taxon>
        <taxon>Pterygota</taxon>
        <taxon>Neoptera</taxon>
        <taxon>Endopterygota</taxon>
        <taxon>Diptera</taxon>
        <taxon>Brachycera</taxon>
        <taxon>Muscomorpha</taxon>
        <taxon>Ephydroidea</taxon>
        <taxon>Drosophilidae</taxon>
        <taxon>Drosophila</taxon>
        <taxon>Sophophora</taxon>
    </lineage>
</organism>
<sequence>MDDDQQFCLRWNNHQSTLISVFDTLLENETLVDCTLAAEGKFLKAHKVVLSACSPYFATLLQEQYDKHPIFILKDVKYQELRAMMDYMYRGEVNISQDQLAALLKAAESLQIKGLSDNRTGGGVAPKPESSGHHRGGKLSGAYTLEQTKRARLATGGAMDTSGDVSGSREGSSSPSRRRRKVRRRSMENDAHDNSNSSVLQAAASNQSILQQTGAGLAVSALVTTQLSSGPAAGTSSQASSTQQQQPLTSTNVTKKTESAKLTSSTAAPASGASASAAVQQAHLHQQQAQTTSDAINTENVQAQSQGGAQGVQGDDEDIDEGSAVGGPNSATGPNPASASASAVHAGVVVKQLASVVDKSSSNHKHKIKDNSVSSVGSEMVIEPKAEYDDDAHDENVEDLTLDEEDMTMEELDQTAGTSQGGEGSSQTYATWQHDRSQDELGLMAQDAQQRDPQDLSRKENTAPDVASTAEIQRSFQRSILNGKQRDEQKIQLPGSRRKRLSVTEVSDMLFEFYKTKSAKVPKAEQPHRQVSPTSGEILDPSTISAIAVYGTASETASKNLNADEVMRVQNATATRVVGAAAGAAASFHPRPKYTLKTAASSTEHTTAIPTSVLVANSAAALTPKPQAAVIAEALMRNGLHNFQQQLRAQEILRQQTPHRRIKEENDVEIAGGDITPTKILENLLRKQQERDLRHSECENEPGYSTEDDEEGRYHAFDDIHLMEQSGGKFGNNSGMGMFNANAHGGSASSILDAHQAFRNLEFTLSDYGGSSSNGSTTSPNGIGLDGEPVYECRHCGKKYRWKSTLRRHENVECGGKEPSHQCPYCPYKSKQRGNLGVHVRKHHTDLPQLPSKRRSKYSMNRENGMSGSMSDDSQGKLIIDFNGKGELETK</sequence>
<gene>
    <name evidence="10" type="primary">lola</name>
    <name evidence="10" type="ORF">CG12052</name>
</gene>